<organism>
    <name type="scientific">Acidiphilium cryptum (strain JF-5)</name>
    <dbReference type="NCBI Taxonomy" id="349163"/>
    <lineage>
        <taxon>Bacteria</taxon>
        <taxon>Pseudomonadati</taxon>
        <taxon>Pseudomonadota</taxon>
        <taxon>Alphaproteobacteria</taxon>
        <taxon>Acetobacterales</taxon>
        <taxon>Acidocellaceae</taxon>
        <taxon>Acidiphilium</taxon>
    </lineage>
</organism>
<feature type="chain" id="PRO_0000380884" description="Putative 8-amino-7-oxononanoate synthase">
    <location>
        <begin position="1"/>
        <end position="381"/>
    </location>
</feature>
<feature type="binding site" evidence="1">
    <location>
        <position position="22"/>
    </location>
    <ligand>
        <name>substrate</name>
    </ligand>
</feature>
<feature type="binding site" evidence="1">
    <location>
        <begin position="109"/>
        <end position="110"/>
    </location>
    <ligand>
        <name>pyridoxal 5'-phosphate</name>
        <dbReference type="ChEBI" id="CHEBI:597326"/>
    </ligand>
</feature>
<feature type="binding site" evidence="1">
    <location>
        <position position="134"/>
    </location>
    <ligand>
        <name>substrate</name>
    </ligand>
</feature>
<feature type="binding site" evidence="1">
    <location>
        <position position="182"/>
    </location>
    <ligand>
        <name>pyridoxal 5'-phosphate</name>
        <dbReference type="ChEBI" id="CHEBI:597326"/>
    </ligand>
</feature>
<feature type="binding site" evidence="1">
    <location>
        <begin position="207"/>
        <end position="210"/>
    </location>
    <ligand>
        <name>pyridoxal 5'-phosphate</name>
        <dbReference type="ChEBI" id="CHEBI:597326"/>
    </ligand>
</feature>
<feature type="binding site" evidence="1">
    <location>
        <begin position="233"/>
        <end position="236"/>
    </location>
    <ligand>
        <name>pyridoxal 5'-phosphate</name>
        <dbReference type="ChEBI" id="CHEBI:597326"/>
    </ligand>
</feature>
<feature type="binding site" evidence="1">
    <location>
        <position position="345"/>
    </location>
    <ligand>
        <name>substrate</name>
    </ligand>
</feature>
<feature type="modified residue" description="N6-(pyridoxal phosphate)lysine" evidence="1">
    <location>
        <position position="236"/>
    </location>
</feature>
<accession>A5FZN8</accession>
<evidence type="ECO:0000250" key="1"/>
<evidence type="ECO:0000305" key="2"/>
<name>BIOF_ACICJ</name>
<protein>
    <recommendedName>
        <fullName>Putative 8-amino-7-oxononanoate synthase</fullName>
        <shortName>AONS</shortName>
        <ecNumber>2.3.1.47</ecNumber>
    </recommendedName>
    <alternativeName>
        <fullName>7-keto-8-amino-pelargonic acid synthase</fullName>
        <shortName>7-KAP synthase</shortName>
    </alternativeName>
    <alternativeName>
        <fullName>8-amino-7-ketopelargonate synthase</fullName>
    </alternativeName>
</protein>
<keyword id="KW-0093">Biotin biosynthesis</keyword>
<keyword id="KW-0663">Pyridoxal phosphate</keyword>
<keyword id="KW-1185">Reference proteome</keyword>
<keyword id="KW-0808">Transferase</keyword>
<proteinExistence type="inferred from homology"/>
<reference key="1">
    <citation type="submission" date="2007-05" db="EMBL/GenBank/DDBJ databases">
        <title>Complete sequence of chromosome of Acidiphilium cryptum JF-5.</title>
        <authorList>
            <consortium name="US DOE Joint Genome Institute"/>
            <person name="Copeland A."/>
            <person name="Lucas S."/>
            <person name="Lapidus A."/>
            <person name="Barry K."/>
            <person name="Detter J.C."/>
            <person name="Glavina del Rio T."/>
            <person name="Hammon N."/>
            <person name="Israni S."/>
            <person name="Dalin E."/>
            <person name="Tice H."/>
            <person name="Pitluck S."/>
            <person name="Sims D."/>
            <person name="Brettin T."/>
            <person name="Bruce D."/>
            <person name="Han C."/>
            <person name="Schmutz J."/>
            <person name="Larimer F."/>
            <person name="Land M."/>
            <person name="Hauser L."/>
            <person name="Kyrpides N."/>
            <person name="Kim E."/>
            <person name="Magnuson T."/>
            <person name="Richardson P."/>
        </authorList>
    </citation>
    <scope>NUCLEOTIDE SEQUENCE [LARGE SCALE GENOMIC DNA]</scope>
    <source>
        <strain>JF-5</strain>
    </source>
</reference>
<sequence>MTTLDQFATDKLARLEAGALRRRLRPTARAPGAVLERDGQRLISFSCNDYLNLSTHPAVIDAAIDAARRHGAGAGASRLVTGDHPLYCALEARLAALKQTEDAVVFGSGFLANTGIIPALMAREDAIFVDELAHACIWAGARLSGAALHVFRHNDLAHLAELLAAHRQAARHAMVVTDGVFSMDGDLAPVGEMLALAKAHDAWLMTDDAHGIGVINEGRGSAHGHDVPLQMGTLSKAVGSYGGYLCASHVVCELIRNRARSFVYTTGLPPAVVGASIAALDLIATDPAMCAAPLAHARRFCAALGLPPAESPIVPLLLGTAERALAAQAVLEAAGFLVAAIRPPTVPEGTARLRFAFTACHAPDDIDRLAQLVHDRILVTA</sequence>
<gene>
    <name type="primary">bioF</name>
    <name type="ordered locus">Acry_1868</name>
</gene>
<comment type="function">
    <text evidence="1">Catalyzes the decarboxylative condensation of pimeloyl-[acyl-carrier protein] and L-alanine to produce 8-amino-7-oxononanoate (AON), [acyl-carrier protein], and carbon dioxide.</text>
</comment>
<comment type="catalytic activity">
    <reaction>
        <text>6-carboxyhexanoyl-[ACP] + L-alanine + H(+) = (8S)-8-amino-7-oxononanoate + holo-[ACP] + CO2</text>
        <dbReference type="Rhea" id="RHEA:42288"/>
        <dbReference type="Rhea" id="RHEA-COMP:9685"/>
        <dbReference type="Rhea" id="RHEA-COMP:9955"/>
        <dbReference type="ChEBI" id="CHEBI:15378"/>
        <dbReference type="ChEBI" id="CHEBI:16526"/>
        <dbReference type="ChEBI" id="CHEBI:57972"/>
        <dbReference type="ChEBI" id="CHEBI:64479"/>
        <dbReference type="ChEBI" id="CHEBI:78846"/>
        <dbReference type="ChEBI" id="CHEBI:149468"/>
        <dbReference type="EC" id="2.3.1.47"/>
    </reaction>
</comment>
<comment type="cofactor">
    <cofactor evidence="1">
        <name>pyridoxal 5'-phosphate</name>
        <dbReference type="ChEBI" id="CHEBI:597326"/>
    </cofactor>
</comment>
<comment type="pathway">
    <text>Cofactor biosynthesis; biotin biosynthesis.</text>
</comment>
<comment type="subunit">
    <text evidence="1">Homodimer.</text>
</comment>
<comment type="similarity">
    <text evidence="2">Belongs to the class-II pyridoxal-phosphate-dependent aminotransferase family. BioF subfamily.</text>
</comment>
<dbReference type="EC" id="2.3.1.47"/>
<dbReference type="EMBL" id="CP000697">
    <property type="protein sequence ID" value="ABQ31070.1"/>
    <property type="molecule type" value="Genomic_DNA"/>
</dbReference>
<dbReference type="RefSeq" id="WP_012039683.1">
    <property type="nucleotide sequence ID" value="NC_009484.1"/>
</dbReference>
<dbReference type="SMR" id="A5FZN8"/>
<dbReference type="STRING" id="349163.Acry_1868"/>
<dbReference type="KEGG" id="acr:Acry_1868"/>
<dbReference type="eggNOG" id="COG0156">
    <property type="taxonomic scope" value="Bacteria"/>
</dbReference>
<dbReference type="HOGENOM" id="CLU_015846_11_0_5"/>
<dbReference type="UniPathway" id="UPA00078"/>
<dbReference type="Proteomes" id="UP000000245">
    <property type="component" value="Chromosome"/>
</dbReference>
<dbReference type="GO" id="GO:0008710">
    <property type="term" value="F:8-amino-7-oxononanoate synthase activity"/>
    <property type="evidence" value="ECO:0007669"/>
    <property type="project" value="UniProtKB-EC"/>
</dbReference>
<dbReference type="GO" id="GO:0030170">
    <property type="term" value="F:pyridoxal phosphate binding"/>
    <property type="evidence" value="ECO:0007669"/>
    <property type="project" value="InterPro"/>
</dbReference>
<dbReference type="GO" id="GO:0009102">
    <property type="term" value="P:biotin biosynthetic process"/>
    <property type="evidence" value="ECO:0007669"/>
    <property type="project" value="UniProtKB-UniPathway"/>
</dbReference>
<dbReference type="Gene3D" id="3.90.1150.10">
    <property type="entry name" value="Aspartate Aminotransferase, domain 1"/>
    <property type="match status" value="1"/>
</dbReference>
<dbReference type="Gene3D" id="3.40.640.10">
    <property type="entry name" value="Type I PLP-dependent aspartate aminotransferase-like (Major domain)"/>
    <property type="match status" value="1"/>
</dbReference>
<dbReference type="InterPro" id="IPR001917">
    <property type="entry name" value="Aminotrans_II_pyridoxalP_BS"/>
</dbReference>
<dbReference type="InterPro" id="IPR004839">
    <property type="entry name" value="Aminotransferase_I/II_large"/>
</dbReference>
<dbReference type="InterPro" id="IPR050087">
    <property type="entry name" value="AON_synthase_class-II"/>
</dbReference>
<dbReference type="InterPro" id="IPR004723">
    <property type="entry name" value="AONS_Archaea/Proteobacteria"/>
</dbReference>
<dbReference type="InterPro" id="IPR015424">
    <property type="entry name" value="PyrdxlP-dep_Trfase"/>
</dbReference>
<dbReference type="InterPro" id="IPR015421">
    <property type="entry name" value="PyrdxlP-dep_Trfase_major"/>
</dbReference>
<dbReference type="InterPro" id="IPR015422">
    <property type="entry name" value="PyrdxlP-dep_Trfase_small"/>
</dbReference>
<dbReference type="NCBIfam" id="TIGR00858">
    <property type="entry name" value="bioF"/>
    <property type="match status" value="1"/>
</dbReference>
<dbReference type="PANTHER" id="PTHR13693:SF100">
    <property type="entry name" value="8-AMINO-7-OXONONANOATE SYNTHASE"/>
    <property type="match status" value="1"/>
</dbReference>
<dbReference type="PANTHER" id="PTHR13693">
    <property type="entry name" value="CLASS II AMINOTRANSFERASE/8-AMINO-7-OXONONANOATE SYNTHASE"/>
    <property type="match status" value="1"/>
</dbReference>
<dbReference type="Pfam" id="PF00155">
    <property type="entry name" value="Aminotran_1_2"/>
    <property type="match status" value="1"/>
</dbReference>
<dbReference type="SUPFAM" id="SSF53383">
    <property type="entry name" value="PLP-dependent transferases"/>
    <property type="match status" value="1"/>
</dbReference>
<dbReference type="PROSITE" id="PS00599">
    <property type="entry name" value="AA_TRANSFER_CLASS_2"/>
    <property type="match status" value="1"/>
</dbReference>